<keyword id="KW-0997">Cell inner membrane</keyword>
<keyword id="KW-1003">Cell membrane</keyword>
<keyword id="KW-0406">Ion transport</keyword>
<keyword id="KW-0472">Membrane</keyword>
<keyword id="KW-0520">NAD</keyword>
<keyword id="KW-0915">Sodium</keyword>
<keyword id="KW-0739">Sodium transport</keyword>
<keyword id="KW-1278">Translocase</keyword>
<keyword id="KW-0812">Transmembrane</keyword>
<keyword id="KW-1133">Transmembrane helix</keyword>
<keyword id="KW-0813">Transport</keyword>
<keyword id="KW-0830">Ubiquinone</keyword>
<dbReference type="EC" id="7.2.1.1" evidence="1"/>
<dbReference type="EMBL" id="FM178379">
    <property type="protein sequence ID" value="CAQ78638.1"/>
    <property type="molecule type" value="Genomic_DNA"/>
</dbReference>
<dbReference type="RefSeq" id="WP_012549723.1">
    <property type="nucleotide sequence ID" value="NC_011312.1"/>
</dbReference>
<dbReference type="SMR" id="B6EIC7"/>
<dbReference type="KEGG" id="vsa:VSAL_I0953"/>
<dbReference type="eggNOG" id="COG2209">
    <property type="taxonomic scope" value="Bacteria"/>
</dbReference>
<dbReference type="HOGENOM" id="CLU_095255_0_0_6"/>
<dbReference type="Proteomes" id="UP000001730">
    <property type="component" value="Chromosome 1"/>
</dbReference>
<dbReference type="GO" id="GO:0009276">
    <property type="term" value="C:Gram-negative-bacterium-type cell wall"/>
    <property type="evidence" value="ECO:0007669"/>
    <property type="project" value="InterPro"/>
</dbReference>
<dbReference type="GO" id="GO:0005886">
    <property type="term" value="C:plasma membrane"/>
    <property type="evidence" value="ECO:0007669"/>
    <property type="project" value="UniProtKB-SubCell"/>
</dbReference>
<dbReference type="GO" id="GO:0016655">
    <property type="term" value="F:oxidoreductase activity, acting on NAD(P)H, quinone or similar compound as acceptor"/>
    <property type="evidence" value="ECO:0007669"/>
    <property type="project" value="UniProtKB-UniRule"/>
</dbReference>
<dbReference type="GO" id="GO:0022904">
    <property type="term" value="P:respiratory electron transport chain"/>
    <property type="evidence" value="ECO:0007669"/>
    <property type="project" value="InterPro"/>
</dbReference>
<dbReference type="GO" id="GO:0006814">
    <property type="term" value="P:sodium ion transport"/>
    <property type="evidence" value="ECO:0007669"/>
    <property type="project" value="UniProtKB-UniRule"/>
</dbReference>
<dbReference type="HAMAP" id="MF_00429">
    <property type="entry name" value="NqrE"/>
    <property type="match status" value="1"/>
</dbReference>
<dbReference type="InterPro" id="IPR003667">
    <property type="entry name" value="NqrDE/RnfAE"/>
</dbReference>
<dbReference type="InterPro" id="IPR050133">
    <property type="entry name" value="NqrDE/RnfAE_oxidrdctase"/>
</dbReference>
<dbReference type="InterPro" id="IPR010967">
    <property type="entry name" value="NqrE"/>
</dbReference>
<dbReference type="NCBIfam" id="TIGR01940">
    <property type="entry name" value="nqrE"/>
    <property type="match status" value="1"/>
</dbReference>
<dbReference type="PANTHER" id="PTHR30335">
    <property type="entry name" value="INTEGRAL MEMBRANE PROTEIN OF SOXR-REDUCING COMPLEX"/>
    <property type="match status" value="1"/>
</dbReference>
<dbReference type="PANTHER" id="PTHR30335:SF1">
    <property type="entry name" value="NA(+)-TRANSLOCATING NADH-QUINONE REDUCTASE SUBUNIT E"/>
    <property type="match status" value="1"/>
</dbReference>
<dbReference type="Pfam" id="PF02508">
    <property type="entry name" value="Rnf-Nqr"/>
    <property type="match status" value="1"/>
</dbReference>
<dbReference type="PIRSF" id="PIRSF006102">
    <property type="entry name" value="NQR_DE"/>
    <property type="match status" value="1"/>
</dbReference>
<reference key="1">
    <citation type="journal article" date="2008" name="BMC Genomics">
        <title>The genome sequence of the fish pathogen Aliivibrio salmonicida strain LFI1238 shows extensive evidence of gene decay.</title>
        <authorList>
            <person name="Hjerde E."/>
            <person name="Lorentzen M.S."/>
            <person name="Holden M.T."/>
            <person name="Seeger K."/>
            <person name="Paulsen S."/>
            <person name="Bason N."/>
            <person name="Churcher C."/>
            <person name="Harris D."/>
            <person name="Norbertczak H."/>
            <person name="Quail M.A."/>
            <person name="Sanders S."/>
            <person name="Thurston S."/>
            <person name="Parkhill J."/>
            <person name="Willassen N.P."/>
            <person name="Thomson N.R."/>
        </authorList>
    </citation>
    <scope>NUCLEOTIDE SEQUENCE [LARGE SCALE GENOMIC DNA]</scope>
    <source>
        <strain>LFI1238</strain>
    </source>
</reference>
<proteinExistence type="inferred from homology"/>
<name>NQRE_ALISL</name>
<sequence length="198" mass="21536">MEHYISLLVKSIFIENMALSFFLGMCTFLAVSKKVKTSFGLGVAVVVVLTLAVPLNNLVYTYLLKDGALVEGVDLSFLNFITFIGVIAALVQILEMVLDRFFPPLYNALGIFLPLITVNCAIFGGVSFMVQRDYNFTESIVYGFGSGVGWMLAIVALAGIREKMKYSDVPPGLRGLGITFITVGLMALGFMSFSGVQL</sequence>
<feature type="chain" id="PRO_1000191696" description="Na(+)-translocating NADH-quinone reductase subunit E">
    <location>
        <begin position="1"/>
        <end position="198"/>
    </location>
</feature>
<feature type="transmembrane region" description="Helical" evidence="1">
    <location>
        <begin position="11"/>
        <end position="31"/>
    </location>
</feature>
<feature type="transmembrane region" description="Helical" evidence="1">
    <location>
        <begin position="39"/>
        <end position="59"/>
    </location>
</feature>
<feature type="transmembrane region" description="Helical" evidence="1">
    <location>
        <begin position="77"/>
        <end position="97"/>
    </location>
</feature>
<feature type="transmembrane region" description="Helical" evidence="1">
    <location>
        <begin position="110"/>
        <end position="130"/>
    </location>
</feature>
<feature type="transmembrane region" description="Helical" evidence="1">
    <location>
        <begin position="140"/>
        <end position="160"/>
    </location>
</feature>
<feature type="transmembrane region" description="Helical" evidence="1">
    <location>
        <begin position="176"/>
        <end position="196"/>
    </location>
</feature>
<evidence type="ECO:0000255" key="1">
    <source>
        <dbReference type="HAMAP-Rule" id="MF_00429"/>
    </source>
</evidence>
<protein>
    <recommendedName>
        <fullName evidence="1">Na(+)-translocating NADH-quinone reductase subunit E</fullName>
        <shortName evidence="1">Na(+)-NQR subunit E</shortName>
        <shortName evidence="1">Na(+)-translocating NQR subunit E</shortName>
        <ecNumber evidence="1">7.2.1.1</ecNumber>
    </recommendedName>
    <alternativeName>
        <fullName evidence="1">NQR complex subunit E</fullName>
    </alternativeName>
    <alternativeName>
        <fullName evidence="1">NQR-1 subunit E</fullName>
    </alternativeName>
</protein>
<accession>B6EIC7</accession>
<gene>
    <name evidence="1" type="primary">nqrE</name>
    <name type="ordered locus">VSAL_I0953</name>
</gene>
<comment type="function">
    <text evidence="1">NQR complex catalyzes the reduction of ubiquinone-1 to ubiquinol by two successive reactions, coupled with the transport of Na(+) ions from the cytoplasm to the periplasm. NqrA to NqrE are probably involved in the second step, the conversion of ubisemiquinone to ubiquinol.</text>
</comment>
<comment type="catalytic activity">
    <reaction evidence="1">
        <text>a ubiquinone + n Na(+)(in) + NADH + H(+) = a ubiquinol + n Na(+)(out) + NAD(+)</text>
        <dbReference type="Rhea" id="RHEA:47748"/>
        <dbReference type="Rhea" id="RHEA-COMP:9565"/>
        <dbReference type="Rhea" id="RHEA-COMP:9566"/>
        <dbReference type="ChEBI" id="CHEBI:15378"/>
        <dbReference type="ChEBI" id="CHEBI:16389"/>
        <dbReference type="ChEBI" id="CHEBI:17976"/>
        <dbReference type="ChEBI" id="CHEBI:29101"/>
        <dbReference type="ChEBI" id="CHEBI:57540"/>
        <dbReference type="ChEBI" id="CHEBI:57945"/>
        <dbReference type="EC" id="7.2.1.1"/>
    </reaction>
</comment>
<comment type="subunit">
    <text evidence="1">Composed of six subunits; NqrA, NqrB, NqrC, NqrD, NqrE and NqrF.</text>
</comment>
<comment type="subcellular location">
    <subcellularLocation>
        <location evidence="1">Cell inner membrane</location>
        <topology evidence="1">Multi-pass membrane protein</topology>
    </subcellularLocation>
</comment>
<comment type="similarity">
    <text evidence="1">Belongs to the NqrDE/RnfAE family.</text>
</comment>
<organism>
    <name type="scientific">Aliivibrio salmonicida (strain LFI1238)</name>
    <name type="common">Vibrio salmonicida (strain LFI1238)</name>
    <dbReference type="NCBI Taxonomy" id="316275"/>
    <lineage>
        <taxon>Bacteria</taxon>
        <taxon>Pseudomonadati</taxon>
        <taxon>Pseudomonadota</taxon>
        <taxon>Gammaproteobacteria</taxon>
        <taxon>Vibrionales</taxon>
        <taxon>Vibrionaceae</taxon>
        <taxon>Aliivibrio</taxon>
    </lineage>
</organism>